<feature type="chain" id="PRO_0000055659" description="Tyrosine--tRNA ligase">
    <location>
        <begin position="1"/>
        <end position="426"/>
    </location>
</feature>
<feature type="domain" description="S4 RNA-binding" evidence="1">
    <location>
        <begin position="359"/>
        <end position="416"/>
    </location>
</feature>
<feature type="short sequence motif" description="'HIGH' region">
    <location>
        <begin position="41"/>
        <end position="50"/>
    </location>
</feature>
<feature type="short sequence motif" description="'KMSKS' region">
    <location>
        <begin position="234"/>
        <end position="238"/>
    </location>
</feature>
<feature type="binding site" evidence="1">
    <location>
        <position position="36"/>
    </location>
    <ligand>
        <name>L-tyrosine</name>
        <dbReference type="ChEBI" id="CHEBI:58315"/>
    </ligand>
</feature>
<feature type="binding site" evidence="1">
    <location>
        <position position="174"/>
    </location>
    <ligand>
        <name>L-tyrosine</name>
        <dbReference type="ChEBI" id="CHEBI:58315"/>
    </ligand>
</feature>
<feature type="binding site" evidence="1">
    <location>
        <position position="178"/>
    </location>
    <ligand>
        <name>L-tyrosine</name>
        <dbReference type="ChEBI" id="CHEBI:58315"/>
    </ligand>
</feature>
<feature type="binding site" evidence="1">
    <location>
        <position position="237"/>
    </location>
    <ligand>
        <name>ATP</name>
        <dbReference type="ChEBI" id="CHEBI:30616"/>
    </ligand>
</feature>
<organism>
    <name type="scientific">Mycobacterium leprae (strain TN)</name>
    <dbReference type="NCBI Taxonomy" id="272631"/>
    <lineage>
        <taxon>Bacteria</taxon>
        <taxon>Bacillati</taxon>
        <taxon>Actinomycetota</taxon>
        <taxon>Actinomycetes</taxon>
        <taxon>Mycobacteriales</taxon>
        <taxon>Mycobacteriaceae</taxon>
        <taxon>Mycobacterium</taxon>
    </lineage>
</organism>
<name>SYY_MYCLE</name>
<sequence>MSSSILNELGWRGLVAQSTDLDALADELRRGPMTVYAGFDPTAPSLHVGHLVPLLVLRRFQRAGHRPIVLAGGATGMIGDPRDIGERTLNEAYTVAEWAERIRGQLERFVEFDDVAKSRNGAIVVNNLEWTSPMSAIEFLRDVGKHFSINLMLDRDTIRRRLNGQGISYTEFSYMLLQANDYAELHQRHGCALQIGGSDQWGNIIAGVRLVRQKLGATVHALTVPLVTAADGAKLGKSTGGGSLWLDPEMTSPYAWYQYFINTSDADVIRYLRWFTFLLPEELVELEQTTVSRPQERAAQRRLATELTVLVHGAAATQAVEHASRALFGQGELARLDEATLATALRETVVAELKPGNPDGIVDLLVASGLSPSRGAARRTIDEGGVLVNNIRIQSEEWTPRTSDFLHGRWLVLRRGKRNIAGIERV</sequence>
<protein>
    <recommendedName>
        <fullName evidence="1">Tyrosine--tRNA ligase</fullName>
        <ecNumber evidence="1">6.1.1.1</ecNumber>
    </recommendedName>
    <alternativeName>
        <fullName evidence="1">Tyrosyl-tRNA synthetase</fullName>
        <shortName evidence="1">TyrRS</shortName>
    </alternativeName>
</protein>
<keyword id="KW-0030">Aminoacyl-tRNA synthetase</keyword>
<keyword id="KW-0067">ATP-binding</keyword>
<keyword id="KW-0963">Cytoplasm</keyword>
<keyword id="KW-0436">Ligase</keyword>
<keyword id="KW-0547">Nucleotide-binding</keyword>
<keyword id="KW-0648">Protein biosynthesis</keyword>
<keyword id="KW-1185">Reference proteome</keyword>
<keyword id="KW-0694">RNA-binding</keyword>
<evidence type="ECO:0000255" key="1">
    <source>
        <dbReference type="HAMAP-Rule" id="MF_02006"/>
    </source>
</evidence>
<reference key="1">
    <citation type="journal article" date="2001" name="Nature">
        <title>Massive gene decay in the leprosy bacillus.</title>
        <authorList>
            <person name="Cole S.T."/>
            <person name="Eiglmeier K."/>
            <person name="Parkhill J."/>
            <person name="James K.D."/>
            <person name="Thomson N.R."/>
            <person name="Wheeler P.R."/>
            <person name="Honore N."/>
            <person name="Garnier T."/>
            <person name="Churcher C.M."/>
            <person name="Harris D.E."/>
            <person name="Mungall K.L."/>
            <person name="Basham D."/>
            <person name="Brown D."/>
            <person name="Chillingworth T."/>
            <person name="Connor R."/>
            <person name="Davies R.M."/>
            <person name="Devlin K."/>
            <person name="Duthoy S."/>
            <person name="Feltwell T."/>
            <person name="Fraser A."/>
            <person name="Hamlin N."/>
            <person name="Holroyd S."/>
            <person name="Hornsby T."/>
            <person name="Jagels K."/>
            <person name="Lacroix C."/>
            <person name="Maclean J."/>
            <person name="Moule S."/>
            <person name="Murphy L.D."/>
            <person name="Oliver K."/>
            <person name="Quail M.A."/>
            <person name="Rajandream M.A."/>
            <person name="Rutherford K.M."/>
            <person name="Rutter S."/>
            <person name="Seeger K."/>
            <person name="Simon S."/>
            <person name="Simmonds M."/>
            <person name="Skelton J."/>
            <person name="Squares R."/>
            <person name="Squares S."/>
            <person name="Stevens K."/>
            <person name="Taylor K."/>
            <person name="Whitehead S."/>
            <person name="Woodward J.R."/>
            <person name="Barrell B.G."/>
        </authorList>
    </citation>
    <scope>NUCLEOTIDE SEQUENCE [LARGE SCALE GENOMIC DNA]</scope>
    <source>
        <strain>TN</strain>
    </source>
</reference>
<reference key="2">
    <citation type="submission" date="1994-03" db="EMBL/GenBank/DDBJ databases">
        <authorList>
            <person name="Smith D.R."/>
            <person name="Robison K."/>
        </authorList>
    </citation>
    <scope>NUCLEOTIDE SEQUENCE [GENOMIC DNA] OF 134-426</scope>
</reference>
<accession>Q49900</accession>
<proteinExistence type="inferred from homology"/>
<gene>
    <name evidence="1" type="primary">tyrS</name>
    <name type="ordered locus">ML1352</name>
    <name type="ORF">MLC1351.16c</name>
</gene>
<comment type="function">
    <text evidence="1">Catalyzes the attachment of tyrosine to tRNA(Tyr) in a two-step reaction: tyrosine is first activated by ATP to form Tyr-AMP and then transferred to the acceptor end of tRNA(Tyr).</text>
</comment>
<comment type="catalytic activity">
    <reaction evidence="1">
        <text>tRNA(Tyr) + L-tyrosine + ATP = L-tyrosyl-tRNA(Tyr) + AMP + diphosphate + H(+)</text>
        <dbReference type="Rhea" id="RHEA:10220"/>
        <dbReference type="Rhea" id="RHEA-COMP:9706"/>
        <dbReference type="Rhea" id="RHEA-COMP:9707"/>
        <dbReference type="ChEBI" id="CHEBI:15378"/>
        <dbReference type="ChEBI" id="CHEBI:30616"/>
        <dbReference type="ChEBI" id="CHEBI:33019"/>
        <dbReference type="ChEBI" id="CHEBI:58315"/>
        <dbReference type="ChEBI" id="CHEBI:78442"/>
        <dbReference type="ChEBI" id="CHEBI:78536"/>
        <dbReference type="ChEBI" id="CHEBI:456215"/>
        <dbReference type="EC" id="6.1.1.1"/>
    </reaction>
</comment>
<comment type="subunit">
    <text evidence="1">Homodimer.</text>
</comment>
<comment type="subcellular location">
    <subcellularLocation>
        <location evidence="1">Cytoplasm</location>
    </subcellularLocation>
</comment>
<comment type="similarity">
    <text evidence="1">Belongs to the class-I aminoacyl-tRNA synthetase family. TyrS type 1 subfamily.</text>
</comment>
<dbReference type="EC" id="6.1.1.1" evidence="1"/>
<dbReference type="EMBL" id="Z95117">
    <property type="protein sequence ID" value="CAB08289.1"/>
    <property type="molecule type" value="Genomic_DNA"/>
</dbReference>
<dbReference type="EMBL" id="AL583921">
    <property type="protein sequence ID" value="CAC31733.1"/>
    <property type="molecule type" value="Genomic_DNA"/>
</dbReference>
<dbReference type="EMBL" id="U00021">
    <property type="protein sequence ID" value="AAA50922.1"/>
    <property type="molecule type" value="Genomic_DNA"/>
</dbReference>
<dbReference type="PIR" id="B87078">
    <property type="entry name" value="B87078"/>
</dbReference>
<dbReference type="PIR" id="S72970">
    <property type="entry name" value="S72970"/>
</dbReference>
<dbReference type="RefSeq" id="NP_301966.1">
    <property type="nucleotide sequence ID" value="NC_002677.1"/>
</dbReference>
<dbReference type="RefSeq" id="WP_010908287.1">
    <property type="nucleotide sequence ID" value="NC_002677.1"/>
</dbReference>
<dbReference type="SMR" id="Q49900"/>
<dbReference type="STRING" id="272631.gene:17575190"/>
<dbReference type="KEGG" id="mle:ML1352"/>
<dbReference type="PATRIC" id="fig|272631.5.peg.2502"/>
<dbReference type="Leproma" id="ML1352"/>
<dbReference type="eggNOG" id="COG0162">
    <property type="taxonomic scope" value="Bacteria"/>
</dbReference>
<dbReference type="HOGENOM" id="CLU_024003_0_2_11"/>
<dbReference type="OrthoDB" id="9804243at2"/>
<dbReference type="Proteomes" id="UP000000806">
    <property type="component" value="Chromosome"/>
</dbReference>
<dbReference type="GO" id="GO:0005829">
    <property type="term" value="C:cytosol"/>
    <property type="evidence" value="ECO:0007669"/>
    <property type="project" value="TreeGrafter"/>
</dbReference>
<dbReference type="GO" id="GO:0005524">
    <property type="term" value="F:ATP binding"/>
    <property type="evidence" value="ECO:0007669"/>
    <property type="project" value="UniProtKB-UniRule"/>
</dbReference>
<dbReference type="GO" id="GO:0003723">
    <property type="term" value="F:RNA binding"/>
    <property type="evidence" value="ECO:0007669"/>
    <property type="project" value="UniProtKB-KW"/>
</dbReference>
<dbReference type="GO" id="GO:0004831">
    <property type="term" value="F:tyrosine-tRNA ligase activity"/>
    <property type="evidence" value="ECO:0007669"/>
    <property type="project" value="UniProtKB-UniRule"/>
</dbReference>
<dbReference type="GO" id="GO:0006437">
    <property type="term" value="P:tyrosyl-tRNA aminoacylation"/>
    <property type="evidence" value="ECO:0007669"/>
    <property type="project" value="UniProtKB-UniRule"/>
</dbReference>
<dbReference type="CDD" id="cd00165">
    <property type="entry name" value="S4"/>
    <property type="match status" value="1"/>
</dbReference>
<dbReference type="CDD" id="cd00805">
    <property type="entry name" value="TyrRS_core"/>
    <property type="match status" value="1"/>
</dbReference>
<dbReference type="FunFam" id="1.10.240.10:FF:000001">
    <property type="entry name" value="Tyrosine--tRNA ligase"/>
    <property type="match status" value="1"/>
</dbReference>
<dbReference type="FunFam" id="3.10.290.10:FF:000014">
    <property type="entry name" value="Tyrosine--tRNA ligase"/>
    <property type="match status" value="1"/>
</dbReference>
<dbReference type="FunFam" id="3.40.50.620:FF:000008">
    <property type="entry name" value="Tyrosine--tRNA ligase"/>
    <property type="match status" value="1"/>
</dbReference>
<dbReference type="Gene3D" id="3.40.50.620">
    <property type="entry name" value="HUPs"/>
    <property type="match status" value="1"/>
</dbReference>
<dbReference type="Gene3D" id="3.10.290.10">
    <property type="entry name" value="RNA-binding S4 domain"/>
    <property type="match status" value="1"/>
</dbReference>
<dbReference type="Gene3D" id="1.10.240.10">
    <property type="entry name" value="Tyrosyl-Transfer RNA Synthetase"/>
    <property type="match status" value="1"/>
</dbReference>
<dbReference type="HAMAP" id="MF_02006">
    <property type="entry name" value="Tyr_tRNA_synth_type1"/>
    <property type="match status" value="1"/>
</dbReference>
<dbReference type="InterPro" id="IPR001412">
    <property type="entry name" value="aa-tRNA-synth_I_CS"/>
</dbReference>
<dbReference type="InterPro" id="IPR002305">
    <property type="entry name" value="aa-tRNA-synth_Ic"/>
</dbReference>
<dbReference type="InterPro" id="IPR014729">
    <property type="entry name" value="Rossmann-like_a/b/a_fold"/>
</dbReference>
<dbReference type="InterPro" id="IPR002942">
    <property type="entry name" value="S4_RNA-bd"/>
</dbReference>
<dbReference type="InterPro" id="IPR036986">
    <property type="entry name" value="S4_RNA-bd_sf"/>
</dbReference>
<dbReference type="InterPro" id="IPR054608">
    <property type="entry name" value="SYY-like_C"/>
</dbReference>
<dbReference type="InterPro" id="IPR002307">
    <property type="entry name" value="Tyr-tRNA-ligase"/>
</dbReference>
<dbReference type="InterPro" id="IPR024088">
    <property type="entry name" value="Tyr-tRNA-ligase_bac-type"/>
</dbReference>
<dbReference type="InterPro" id="IPR024107">
    <property type="entry name" value="Tyr-tRNA-ligase_bac_1"/>
</dbReference>
<dbReference type="NCBIfam" id="TIGR00234">
    <property type="entry name" value="tyrS"/>
    <property type="match status" value="1"/>
</dbReference>
<dbReference type="PANTHER" id="PTHR11766:SF0">
    <property type="entry name" value="TYROSINE--TRNA LIGASE, MITOCHONDRIAL"/>
    <property type="match status" value="1"/>
</dbReference>
<dbReference type="PANTHER" id="PTHR11766">
    <property type="entry name" value="TYROSYL-TRNA SYNTHETASE"/>
    <property type="match status" value="1"/>
</dbReference>
<dbReference type="Pfam" id="PF22421">
    <property type="entry name" value="SYY_C-terminal"/>
    <property type="match status" value="1"/>
</dbReference>
<dbReference type="Pfam" id="PF00579">
    <property type="entry name" value="tRNA-synt_1b"/>
    <property type="match status" value="1"/>
</dbReference>
<dbReference type="PRINTS" id="PR01040">
    <property type="entry name" value="TRNASYNTHTYR"/>
</dbReference>
<dbReference type="SMART" id="SM00363">
    <property type="entry name" value="S4"/>
    <property type="match status" value="1"/>
</dbReference>
<dbReference type="SUPFAM" id="SSF55174">
    <property type="entry name" value="Alpha-L RNA-binding motif"/>
    <property type="match status" value="1"/>
</dbReference>
<dbReference type="SUPFAM" id="SSF52374">
    <property type="entry name" value="Nucleotidylyl transferase"/>
    <property type="match status" value="1"/>
</dbReference>
<dbReference type="PROSITE" id="PS00178">
    <property type="entry name" value="AA_TRNA_LIGASE_I"/>
    <property type="match status" value="1"/>
</dbReference>
<dbReference type="PROSITE" id="PS50889">
    <property type="entry name" value="S4"/>
    <property type="match status" value="1"/>
</dbReference>